<organism>
    <name type="scientific">Blochmanniella pennsylvanica (strain BPEN)</name>
    <dbReference type="NCBI Taxonomy" id="291272"/>
    <lineage>
        <taxon>Bacteria</taxon>
        <taxon>Pseudomonadati</taxon>
        <taxon>Pseudomonadota</taxon>
        <taxon>Gammaproteobacteria</taxon>
        <taxon>Enterobacterales</taxon>
        <taxon>Enterobacteriaceae</taxon>
        <taxon>ant endosymbionts</taxon>
        <taxon>Candidatus Blochmanniella</taxon>
    </lineage>
</organism>
<sequence>MSWIERIFNKSTIIPTRKIDIPKGIWTKCDNCGQLLYKKELERNLEVCPKCDHHMRIAARVRLFSFLDKGSTSELGSEFEPKDVLKFRDSKRYKDRLISAQKITKEKDALIVMQGTLYGMKIVAASFEFAFIGGSMSSVVGARFVHAVNQALKIKCPLVCFTASGGARMQEALMSLMQMARTSAALANLHERCLPYISVLTNPTMGGVSASLAMLGDLNIAEPKALIGFAGPRIIEQTVREKLPLGFQRSEFLLEKGSIDLIIRRPDLRFKVAGLLAKLTQQPIPKVDYRHCVE</sequence>
<evidence type="ECO:0000255" key="1">
    <source>
        <dbReference type="HAMAP-Rule" id="MF_01395"/>
    </source>
</evidence>
<evidence type="ECO:0000255" key="2">
    <source>
        <dbReference type="PROSITE-ProRule" id="PRU01136"/>
    </source>
</evidence>
<reference key="1">
    <citation type="journal article" date="2005" name="Genome Res.">
        <title>Genome sequence of Blochmannia pennsylvanicus indicates parallel evolutionary trends among bacterial mutualists of insects.</title>
        <authorList>
            <person name="Degnan P.H."/>
            <person name="Lazarus A.B."/>
            <person name="Wernegreen J.J."/>
        </authorList>
    </citation>
    <scope>NUCLEOTIDE SEQUENCE [LARGE SCALE GENOMIC DNA]</scope>
    <source>
        <strain>BPEN</strain>
    </source>
</reference>
<accession>Q492H4</accession>
<gene>
    <name evidence="1" type="primary">accD</name>
    <name type="ordered locus">BPEN_511</name>
</gene>
<proteinExistence type="inferred from homology"/>
<comment type="function">
    <text evidence="1">Component of the acetyl coenzyme A carboxylase (ACC) complex. Biotin carboxylase (BC) catalyzes the carboxylation of biotin on its carrier protein (BCCP) and then the CO(2) group is transferred by the transcarboxylase to acetyl-CoA to form malonyl-CoA.</text>
</comment>
<comment type="catalytic activity">
    <reaction evidence="1">
        <text>N(6)-carboxybiotinyl-L-lysyl-[protein] + acetyl-CoA = N(6)-biotinyl-L-lysyl-[protein] + malonyl-CoA</text>
        <dbReference type="Rhea" id="RHEA:54728"/>
        <dbReference type="Rhea" id="RHEA-COMP:10505"/>
        <dbReference type="Rhea" id="RHEA-COMP:10506"/>
        <dbReference type="ChEBI" id="CHEBI:57288"/>
        <dbReference type="ChEBI" id="CHEBI:57384"/>
        <dbReference type="ChEBI" id="CHEBI:83144"/>
        <dbReference type="ChEBI" id="CHEBI:83145"/>
        <dbReference type="EC" id="2.1.3.15"/>
    </reaction>
</comment>
<comment type="cofactor">
    <cofactor evidence="1">
        <name>Zn(2+)</name>
        <dbReference type="ChEBI" id="CHEBI:29105"/>
    </cofactor>
    <text evidence="1">Binds 1 zinc ion per subunit.</text>
</comment>
<comment type="pathway">
    <text evidence="1">Lipid metabolism; malonyl-CoA biosynthesis; malonyl-CoA from acetyl-CoA: step 1/1.</text>
</comment>
<comment type="subunit">
    <text evidence="1">Acetyl-CoA carboxylase is a heterohexamer composed of biotin carboxyl carrier protein (AccB), biotin carboxylase (AccC) and two subunits each of ACCase subunit alpha (AccA) and ACCase subunit beta (AccD).</text>
</comment>
<comment type="subcellular location">
    <subcellularLocation>
        <location evidence="1">Cytoplasm</location>
    </subcellularLocation>
</comment>
<comment type="similarity">
    <text evidence="1">Belongs to the AccD/PCCB family.</text>
</comment>
<feature type="chain" id="PRO_0000358957" description="Acetyl-coenzyme A carboxylase carboxyl transferase subunit beta">
    <location>
        <begin position="1"/>
        <end position="294"/>
    </location>
</feature>
<feature type="domain" description="CoA carboxyltransferase N-terminal" evidence="2">
    <location>
        <begin position="25"/>
        <end position="294"/>
    </location>
</feature>
<feature type="zinc finger region" description="C4-type" evidence="1">
    <location>
        <begin position="29"/>
        <end position="51"/>
    </location>
</feature>
<feature type="binding site" evidence="1">
    <location>
        <position position="29"/>
    </location>
    <ligand>
        <name>Zn(2+)</name>
        <dbReference type="ChEBI" id="CHEBI:29105"/>
    </ligand>
</feature>
<feature type="binding site" evidence="1">
    <location>
        <position position="32"/>
    </location>
    <ligand>
        <name>Zn(2+)</name>
        <dbReference type="ChEBI" id="CHEBI:29105"/>
    </ligand>
</feature>
<feature type="binding site" evidence="1">
    <location>
        <position position="48"/>
    </location>
    <ligand>
        <name>Zn(2+)</name>
        <dbReference type="ChEBI" id="CHEBI:29105"/>
    </ligand>
</feature>
<feature type="binding site" evidence="1">
    <location>
        <position position="51"/>
    </location>
    <ligand>
        <name>Zn(2+)</name>
        <dbReference type="ChEBI" id="CHEBI:29105"/>
    </ligand>
</feature>
<keyword id="KW-0067">ATP-binding</keyword>
<keyword id="KW-0963">Cytoplasm</keyword>
<keyword id="KW-0275">Fatty acid biosynthesis</keyword>
<keyword id="KW-0276">Fatty acid metabolism</keyword>
<keyword id="KW-0444">Lipid biosynthesis</keyword>
<keyword id="KW-0443">Lipid metabolism</keyword>
<keyword id="KW-0479">Metal-binding</keyword>
<keyword id="KW-0547">Nucleotide-binding</keyword>
<keyword id="KW-1185">Reference proteome</keyword>
<keyword id="KW-0808">Transferase</keyword>
<keyword id="KW-0862">Zinc</keyword>
<keyword id="KW-0863">Zinc-finger</keyword>
<protein>
    <recommendedName>
        <fullName evidence="1">Acetyl-coenzyme A carboxylase carboxyl transferase subunit beta</fullName>
        <shortName evidence="1">ACCase subunit beta</shortName>
        <shortName evidence="1">Acetyl-CoA carboxylase carboxyltransferase subunit beta</shortName>
        <ecNumber evidence="1">2.1.3.15</ecNumber>
    </recommendedName>
</protein>
<name>ACCD_BLOPB</name>
<dbReference type="EC" id="2.1.3.15" evidence="1"/>
<dbReference type="EMBL" id="CP000016">
    <property type="protein sequence ID" value="AAZ41125.1"/>
    <property type="molecule type" value="Genomic_DNA"/>
</dbReference>
<dbReference type="RefSeq" id="WP_011283036.1">
    <property type="nucleotide sequence ID" value="NC_007292.1"/>
</dbReference>
<dbReference type="SMR" id="Q492H4"/>
<dbReference type="STRING" id="291272.BPEN_511"/>
<dbReference type="KEGG" id="bpn:BPEN_511"/>
<dbReference type="eggNOG" id="COG0777">
    <property type="taxonomic scope" value="Bacteria"/>
</dbReference>
<dbReference type="HOGENOM" id="CLU_015486_1_0_6"/>
<dbReference type="OrthoDB" id="9772975at2"/>
<dbReference type="UniPathway" id="UPA00655">
    <property type="reaction ID" value="UER00711"/>
</dbReference>
<dbReference type="Proteomes" id="UP000007794">
    <property type="component" value="Chromosome"/>
</dbReference>
<dbReference type="GO" id="GO:0009329">
    <property type="term" value="C:acetate CoA-transferase complex"/>
    <property type="evidence" value="ECO:0007669"/>
    <property type="project" value="TreeGrafter"/>
</dbReference>
<dbReference type="GO" id="GO:0003989">
    <property type="term" value="F:acetyl-CoA carboxylase activity"/>
    <property type="evidence" value="ECO:0007669"/>
    <property type="project" value="InterPro"/>
</dbReference>
<dbReference type="GO" id="GO:0005524">
    <property type="term" value="F:ATP binding"/>
    <property type="evidence" value="ECO:0007669"/>
    <property type="project" value="UniProtKB-KW"/>
</dbReference>
<dbReference type="GO" id="GO:0016743">
    <property type="term" value="F:carboxyl- or carbamoyltransferase activity"/>
    <property type="evidence" value="ECO:0007669"/>
    <property type="project" value="UniProtKB-UniRule"/>
</dbReference>
<dbReference type="GO" id="GO:0008270">
    <property type="term" value="F:zinc ion binding"/>
    <property type="evidence" value="ECO:0007669"/>
    <property type="project" value="UniProtKB-UniRule"/>
</dbReference>
<dbReference type="GO" id="GO:0006633">
    <property type="term" value="P:fatty acid biosynthetic process"/>
    <property type="evidence" value="ECO:0007669"/>
    <property type="project" value="UniProtKB-KW"/>
</dbReference>
<dbReference type="GO" id="GO:2001295">
    <property type="term" value="P:malonyl-CoA biosynthetic process"/>
    <property type="evidence" value="ECO:0007669"/>
    <property type="project" value="UniProtKB-UniRule"/>
</dbReference>
<dbReference type="Gene3D" id="3.90.226.10">
    <property type="entry name" value="2-enoyl-CoA Hydratase, Chain A, domain 1"/>
    <property type="match status" value="1"/>
</dbReference>
<dbReference type="HAMAP" id="MF_01395">
    <property type="entry name" value="AcetylCoA_CT_beta"/>
    <property type="match status" value="1"/>
</dbReference>
<dbReference type="InterPro" id="IPR034733">
    <property type="entry name" value="AcCoA_carboxyl_beta"/>
</dbReference>
<dbReference type="InterPro" id="IPR000438">
    <property type="entry name" value="Acetyl_CoA_COase_Trfase_b_su"/>
</dbReference>
<dbReference type="InterPro" id="IPR029045">
    <property type="entry name" value="ClpP/crotonase-like_dom_sf"/>
</dbReference>
<dbReference type="InterPro" id="IPR011762">
    <property type="entry name" value="COA_CT_N"/>
</dbReference>
<dbReference type="InterPro" id="IPR041010">
    <property type="entry name" value="Znf-ACC"/>
</dbReference>
<dbReference type="NCBIfam" id="TIGR00515">
    <property type="entry name" value="accD"/>
    <property type="match status" value="1"/>
</dbReference>
<dbReference type="PANTHER" id="PTHR42995">
    <property type="entry name" value="ACETYL-COENZYME A CARBOXYLASE CARBOXYL TRANSFERASE SUBUNIT BETA, CHLOROPLASTIC"/>
    <property type="match status" value="1"/>
</dbReference>
<dbReference type="PANTHER" id="PTHR42995:SF5">
    <property type="entry name" value="ACETYL-COENZYME A CARBOXYLASE CARBOXYL TRANSFERASE SUBUNIT BETA, CHLOROPLASTIC"/>
    <property type="match status" value="1"/>
</dbReference>
<dbReference type="Pfam" id="PF01039">
    <property type="entry name" value="Carboxyl_trans"/>
    <property type="match status" value="1"/>
</dbReference>
<dbReference type="Pfam" id="PF17848">
    <property type="entry name" value="Zn_ribbon_ACC"/>
    <property type="match status" value="1"/>
</dbReference>
<dbReference type="PRINTS" id="PR01070">
    <property type="entry name" value="ACCCTRFRASEB"/>
</dbReference>
<dbReference type="SUPFAM" id="SSF52096">
    <property type="entry name" value="ClpP/crotonase"/>
    <property type="match status" value="1"/>
</dbReference>
<dbReference type="PROSITE" id="PS50980">
    <property type="entry name" value="COA_CT_NTER"/>
    <property type="match status" value="1"/>
</dbReference>